<comment type="function">
    <text evidence="1">Succinyl-CoA synthetase functions in the citric acid cycle (TCA), coupling the hydrolysis of succinyl-CoA to the synthesis of either ATP or GTP and thus represents the only step of substrate-level phosphorylation in the TCA. The beta subunit provides nucleotide specificity of the enzyme and binds the substrate succinate, while the binding sites for coenzyme A and phosphate are found in the alpha subunit.</text>
</comment>
<comment type="catalytic activity">
    <reaction evidence="1">
        <text>succinate + ATP + CoA = succinyl-CoA + ADP + phosphate</text>
        <dbReference type="Rhea" id="RHEA:17661"/>
        <dbReference type="ChEBI" id="CHEBI:30031"/>
        <dbReference type="ChEBI" id="CHEBI:30616"/>
        <dbReference type="ChEBI" id="CHEBI:43474"/>
        <dbReference type="ChEBI" id="CHEBI:57287"/>
        <dbReference type="ChEBI" id="CHEBI:57292"/>
        <dbReference type="ChEBI" id="CHEBI:456216"/>
        <dbReference type="EC" id="6.2.1.5"/>
    </reaction>
    <physiologicalReaction direction="right-to-left" evidence="1">
        <dbReference type="Rhea" id="RHEA:17663"/>
    </physiologicalReaction>
</comment>
<comment type="catalytic activity">
    <reaction evidence="1">
        <text>GTP + succinate + CoA = succinyl-CoA + GDP + phosphate</text>
        <dbReference type="Rhea" id="RHEA:22120"/>
        <dbReference type="ChEBI" id="CHEBI:30031"/>
        <dbReference type="ChEBI" id="CHEBI:37565"/>
        <dbReference type="ChEBI" id="CHEBI:43474"/>
        <dbReference type="ChEBI" id="CHEBI:57287"/>
        <dbReference type="ChEBI" id="CHEBI:57292"/>
        <dbReference type="ChEBI" id="CHEBI:58189"/>
    </reaction>
    <physiologicalReaction direction="right-to-left" evidence="1">
        <dbReference type="Rhea" id="RHEA:22122"/>
    </physiologicalReaction>
</comment>
<comment type="cofactor">
    <cofactor evidence="1">
        <name>Mg(2+)</name>
        <dbReference type="ChEBI" id="CHEBI:18420"/>
    </cofactor>
    <text evidence="1">Binds 1 Mg(2+) ion per subunit.</text>
</comment>
<comment type="pathway">
    <text evidence="1">Carbohydrate metabolism; tricarboxylic acid cycle; succinate from succinyl-CoA (ligase route): step 1/1.</text>
</comment>
<comment type="subunit">
    <text evidence="1">Heterotetramer of two alpha and two beta subunits.</text>
</comment>
<comment type="similarity">
    <text evidence="1">Belongs to the succinate/malate CoA ligase beta subunit family.</text>
</comment>
<proteinExistence type="inferred from homology"/>
<dbReference type="EC" id="6.2.1.5" evidence="1"/>
<dbReference type="EMBL" id="AE016825">
    <property type="protein sequence ID" value="AAQ58750.1"/>
    <property type="molecule type" value="Genomic_DNA"/>
</dbReference>
<dbReference type="RefSeq" id="WP_011134630.1">
    <property type="nucleotide sequence ID" value="NC_005085.1"/>
</dbReference>
<dbReference type="SMR" id="Q7NZ47"/>
<dbReference type="STRING" id="243365.CV_1075"/>
<dbReference type="GeneID" id="66366773"/>
<dbReference type="KEGG" id="cvi:CV_1075"/>
<dbReference type="eggNOG" id="COG0045">
    <property type="taxonomic scope" value="Bacteria"/>
</dbReference>
<dbReference type="HOGENOM" id="CLU_037430_0_2_4"/>
<dbReference type="OrthoDB" id="9802602at2"/>
<dbReference type="UniPathway" id="UPA00223">
    <property type="reaction ID" value="UER00999"/>
</dbReference>
<dbReference type="Proteomes" id="UP000001424">
    <property type="component" value="Chromosome"/>
</dbReference>
<dbReference type="GO" id="GO:0005829">
    <property type="term" value="C:cytosol"/>
    <property type="evidence" value="ECO:0007669"/>
    <property type="project" value="TreeGrafter"/>
</dbReference>
<dbReference type="GO" id="GO:0042709">
    <property type="term" value="C:succinate-CoA ligase complex"/>
    <property type="evidence" value="ECO:0007669"/>
    <property type="project" value="TreeGrafter"/>
</dbReference>
<dbReference type="GO" id="GO:0005524">
    <property type="term" value="F:ATP binding"/>
    <property type="evidence" value="ECO:0007669"/>
    <property type="project" value="UniProtKB-UniRule"/>
</dbReference>
<dbReference type="GO" id="GO:0000287">
    <property type="term" value="F:magnesium ion binding"/>
    <property type="evidence" value="ECO:0007669"/>
    <property type="project" value="UniProtKB-UniRule"/>
</dbReference>
<dbReference type="GO" id="GO:0004775">
    <property type="term" value="F:succinate-CoA ligase (ADP-forming) activity"/>
    <property type="evidence" value="ECO:0007669"/>
    <property type="project" value="UniProtKB-UniRule"/>
</dbReference>
<dbReference type="GO" id="GO:0004776">
    <property type="term" value="F:succinate-CoA ligase (GDP-forming) activity"/>
    <property type="evidence" value="ECO:0007669"/>
    <property type="project" value="RHEA"/>
</dbReference>
<dbReference type="GO" id="GO:0006104">
    <property type="term" value="P:succinyl-CoA metabolic process"/>
    <property type="evidence" value="ECO:0007669"/>
    <property type="project" value="TreeGrafter"/>
</dbReference>
<dbReference type="GO" id="GO:0006099">
    <property type="term" value="P:tricarboxylic acid cycle"/>
    <property type="evidence" value="ECO:0007669"/>
    <property type="project" value="UniProtKB-UniRule"/>
</dbReference>
<dbReference type="FunFam" id="3.30.1490.20:FF:000002">
    <property type="entry name" value="Succinate--CoA ligase [ADP-forming] subunit beta"/>
    <property type="match status" value="1"/>
</dbReference>
<dbReference type="FunFam" id="3.30.470.20:FF:000002">
    <property type="entry name" value="Succinate--CoA ligase [ADP-forming] subunit beta"/>
    <property type="match status" value="1"/>
</dbReference>
<dbReference type="FunFam" id="3.40.50.261:FF:000001">
    <property type="entry name" value="Succinate--CoA ligase [ADP-forming] subunit beta"/>
    <property type="match status" value="1"/>
</dbReference>
<dbReference type="Gene3D" id="3.30.1490.20">
    <property type="entry name" value="ATP-grasp fold, A domain"/>
    <property type="match status" value="1"/>
</dbReference>
<dbReference type="Gene3D" id="3.30.470.20">
    <property type="entry name" value="ATP-grasp fold, B domain"/>
    <property type="match status" value="1"/>
</dbReference>
<dbReference type="Gene3D" id="3.40.50.261">
    <property type="entry name" value="Succinyl-CoA synthetase domains"/>
    <property type="match status" value="1"/>
</dbReference>
<dbReference type="HAMAP" id="MF_00558">
    <property type="entry name" value="Succ_CoA_beta"/>
    <property type="match status" value="1"/>
</dbReference>
<dbReference type="InterPro" id="IPR011761">
    <property type="entry name" value="ATP-grasp"/>
</dbReference>
<dbReference type="InterPro" id="IPR013650">
    <property type="entry name" value="ATP-grasp_succ-CoA_synth-type"/>
</dbReference>
<dbReference type="InterPro" id="IPR013815">
    <property type="entry name" value="ATP_grasp_subdomain_1"/>
</dbReference>
<dbReference type="InterPro" id="IPR017866">
    <property type="entry name" value="Succ-CoA_synthase_bsu_CS"/>
</dbReference>
<dbReference type="InterPro" id="IPR005811">
    <property type="entry name" value="SUCC_ACL_C"/>
</dbReference>
<dbReference type="InterPro" id="IPR005809">
    <property type="entry name" value="Succ_CoA_ligase-like_bsu"/>
</dbReference>
<dbReference type="InterPro" id="IPR016102">
    <property type="entry name" value="Succinyl-CoA_synth-like"/>
</dbReference>
<dbReference type="NCBIfam" id="NF001913">
    <property type="entry name" value="PRK00696.1"/>
    <property type="match status" value="1"/>
</dbReference>
<dbReference type="NCBIfam" id="TIGR01016">
    <property type="entry name" value="sucCoAbeta"/>
    <property type="match status" value="1"/>
</dbReference>
<dbReference type="PANTHER" id="PTHR11815:SF10">
    <property type="entry name" value="SUCCINATE--COA LIGASE [GDP-FORMING] SUBUNIT BETA, MITOCHONDRIAL"/>
    <property type="match status" value="1"/>
</dbReference>
<dbReference type="PANTHER" id="PTHR11815">
    <property type="entry name" value="SUCCINYL-COA SYNTHETASE BETA CHAIN"/>
    <property type="match status" value="1"/>
</dbReference>
<dbReference type="Pfam" id="PF08442">
    <property type="entry name" value="ATP-grasp_2"/>
    <property type="match status" value="1"/>
</dbReference>
<dbReference type="Pfam" id="PF00549">
    <property type="entry name" value="Ligase_CoA"/>
    <property type="match status" value="1"/>
</dbReference>
<dbReference type="PIRSF" id="PIRSF001554">
    <property type="entry name" value="SucCS_beta"/>
    <property type="match status" value="1"/>
</dbReference>
<dbReference type="SUPFAM" id="SSF56059">
    <property type="entry name" value="Glutathione synthetase ATP-binding domain-like"/>
    <property type="match status" value="1"/>
</dbReference>
<dbReference type="SUPFAM" id="SSF52210">
    <property type="entry name" value="Succinyl-CoA synthetase domains"/>
    <property type="match status" value="1"/>
</dbReference>
<dbReference type="PROSITE" id="PS50975">
    <property type="entry name" value="ATP_GRASP"/>
    <property type="match status" value="1"/>
</dbReference>
<dbReference type="PROSITE" id="PS01217">
    <property type="entry name" value="SUCCINYL_COA_LIG_3"/>
    <property type="match status" value="1"/>
</dbReference>
<feature type="chain" id="PRO_1000082064" description="Succinate--CoA ligase [ADP-forming] subunit beta">
    <location>
        <begin position="1"/>
        <end position="390"/>
    </location>
</feature>
<feature type="domain" description="ATP-grasp" evidence="1">
    <location>
        <begin position="9"/>
        <end position="245"/>
    </location>
</feature>
<feature type="binding site" evidence="1">
    <location>
        <position position="46"/>
    </location>
    <ligand>
        <name>ATP</name>
        <dbReference type="ChEBI" id="CHEBI:30616"/>
    </ligand>
</feature>
<feature type="binding site" evidence="1">
    <location>
        <begin position="53"/>
        <end position="55"/>
    </location>
    <ligand>
        <name>ATP</name>
        <dbReference type="ChEBI" id="CHEBI:30616"/>
    </ligand>
</feature>
<feature type="binding site" evidence="1">
    <location>
        <position position="100"/>
    </location>
    <ligand>
        <name>ATP</name>
        <dbReference type="ChEBI" id="CHEBI:30616"/>
    </ligand>
</feature>
<feature type="binding site" evidence="1">
    <location>
        <position position="103"/>
    </location>
    <ligand>
        <name>ATP</name>
        <dbReference type="ChEBI" id="CHEBI:30616"/>
    </ligand>
</feature>
<feature type="binding site" evidence="1">
    <location>
        <position position="108"/>
    </location>
    <ligand>
        <name>ATP</name>
        <dbReference type="ChEBI" id="CHEBI:30616"/>
    </ligand>
</feature>
<feature type="binding site" evidence="1">
    <location>
        <position position="200"/>
    </location>
    <ligand>
        <name>Mg(2+)</name>
        <dbReference type="ChEBI" id="CHEBI:18420"/>
    </ligand>
</feature>
<feature type="binding site" evidence="1">
    <location>
        <position position="214"/>
    </location>
    <ligand>
        <name>Mg(2+)</name>
        <dbReference type="ChEBI" id="CHEBI:18420"/>
    </ligand>
</feature>
<feature type="binding site" evidence="1">
    <location>
        <position position="265"/>
    </location>
    <ligand>
        <name>substrate</name>
        <note>ligand shared with subunit alpha</note>
    </ligand>
</feature>
<feature type="binding site" evidence="1">
    <location>
        <begin position="322"/>
        <end position="324"/>
    </location>
    <ligand>
        <name>substrate</name>
        <note>ligand shared with subunit alpha</note>
    </ligand>
</feature>
<keyword id="KW-0067">ATP-binding</keyword>
<keyword id="KW-0436">Ligase</keyword>
<keyword id="KW-0460">Magnesium</keyword>
<keyword id="KW-0479">Metal-binding</keyword>
<keyword id="KW-0547">Nucleotide-binding</keyword>
<keyword id="KW-1185">Reference proteome</keyword>
<keyword id="KW-0816">Tricarboxylic acid cycle</keyword>
<sequence>MNLHEYQAKELLSRYGLPVQQGILAKSPEEAAAAYDKLGGKFAVVKAQVHAGGRGKAGGVKVVKSREEAAEVAKTLIGTNLVTYQTDAAGQPVNSVLVCEDMYPVQRELYLGAVVDRGSQRVVFMVSTEGGVEIEKVAEETPEKIIKIEVDPLVGMQPFQARDAAFALGLSGAQVAAFSKLMLGSYQAFIENDFALFEVNPLALRENGELACVDGKINLDSNALYRHPELLAQRDKSQENEREVKASEFDLNYVALEGNIGCMVNGAGLAMATMDIIKLKGGQPANFLDVGGGATKERVIEAFKLILADTSVQGVLINIFGGIVRCDMIAEAIIAAVKEVNVTVPVVVRLEGNNAELGAKILDESGLKLTSAQGLNDAAEKIVAAVKAVA</sequence>
<gene>
    <name evidence="1" type="primary">sucC</name>
    <name type="ordered locus">CV_1075</name>
</gene>
<evidence type="ECO:0000255" key="1">
    <source>
        <dbReference type="HAMAP-Rule" id="MF_00558"/>
    </source>
</evidence>
<protein>
    <recommendedName>
        <fullName evidence="1">Succinate--CoA ligase [ADP-forming] subunit beta</fullName>
        <ecNumber evidence="1">6.2.1.5</ecNumber>
    </recommendedName>
    <alternativeName>
        <fullName evidence="1">Succinyl-CoA synthetase subunit beta</fullName>
        <shortName evidence="1">SCS-beta</shortName>
    </alternativeName>
</protein>
<organism>
    <name type="scientific">Chromobacterium violaceum (strain ATCC 12472 / DSM 30191 / JCM 1249 / CCUG 213 / NBRC 12614 / NCIMB 9131 / NCTC 9757 / MK)</name>
    <dbReference type="NCBI Taxonomy" id="243365"/>
    <lineage>
        <taxon>Bacteria</taxon>
        <taxon>Pseudomonadati</taxon>
        <taxon>Pseudomonadota</taxon>
        <taxon>Betaproteobacteria</taxon>
        <taxon>Neisseriales</taxon>
        <taxon>Chromobacteriaceae</taxon>
        <taxon>Chromobacterium</taxon>
    </lineage>
</organism>
<reference key="1">
    <citation type="journal article" date="2003" name="Proc. Natl. Acad. Sci. U.S.A.">
        <title>The complete genome sequence of Chromobacterium violaceum reveals remarkable and exploitable bacterial adaptability.</title>
        <authorList>
            <person name="Vasconcelos A.T.R."/>
            <person name="de Almeida D.F."/>
            <person name="Hungria M."/>
            <person name="Guimaraes C.T."/>
            <person name="Antonio R.V."/>
            <person name="Almeida F.C."/>
            <person name="de Almeida L.G.P."/>
            <person name="de Almeida R."/>
            <person name="Alves-Gomes J.A."/>
            <person name="Andrade E.M."/>
            <person name="Araripe J."/>
            <person name="de Araujo M.F.F."/>
            <person name="Astolfi-Filho S."/>
            <person name="Azevedo V."/>
            <person name="Baptista A.J."/>
            <person name="Bataus L.A.M."/>
            <person name="Batista J.S."/>
            <person name="Belo A."/>
            <person name="van den Berg C."/>
            <person name="Bogo M."/>
            <person name="Bonatto S."/>
            <person name="Bordignon J."/>
            <person name="Brigido M.M."/>
            <person name="Brito C.A."/>
            <person name="Brocchi M."/>
            <person name="Burity H.A."/>
            <person name="Camargo A.A."/>
            <person name="Cardoso D.D.P."/>
            <person name="Carneiro N.P."/>
            <person name="Carraro D.M."/>
            <person name="Carvalho C.M.B."/>
            <person name="Cascardo J.C.M."/>
            <person name="Cavada B.S."/>
            <person name="Chueire L.M.O."/>
            <person name="Creczynski-Pasa T.B."/>
            <person name="Cunha-Junior N.C."/>
            <person name="Fagundes N."/>
            <person name="Falcao C.L."/>
            <person name="Fantinatti F."/>
            <person name="Farias I.P."/>
            <person name="Felipe M.S.S."/>
            <person name="Ferrari L.P."/>
            <person name="Ferro J.A."/>
            <person name="Ferro M.I.T."/>
            <person name="Franco G.R."/>
            <person name="Freitas N.S.A."/>
            <person name="Furlan L.R."/>
            <person name="Gazzinelli R.T."/>
            <person name="Gomes E.A."/>
            <person name="Goncalves P.R."/>
            <person name="Grangeiro T.B."/>
            <person name="Grattapaglia D."/>
            <person name="Grisard E.C."/>
            <person name="Hanna E.S."/>
            <person name="Jardim S.N."/>
            <person name="Laurino J."/>
            <person name="Leoi L.C.T."/>
            <person name="Lima L.F.A."/>
            <person name="Loureiro M.F."/>
            <person name="Lyra M.C.C.P."/>
            <person name="Madeira H.M.F."/>
            <person name="Manfio G.P."/>
            <person name="Maranhao A.Q."/>
            <person name="Martins W.S."/>
            <person name="di Mauro S.M.Z."/>
            <person name="de Medeiros S.R.B."/>
            <person name="Meissner R.V."/>
            <person name="Moreira M.A.M."/>
            <person name="Nascimento F.F."/>
            <person name="Nicolas M.F."/>
            <person name="Oliveira J.G."/>
            <person name="Oliveira S.C."/>
            <person name="Paixao R.F.C."/>
            <person name="Parente J.A."/>
            <person name="Pedrosa F.O."/>
            <person name="Pena S.D.J."/>
            <person name="Pereira J.O."/>
            <person name="Pereira M."/>
            <person name="Pinto L.S.R.C."/>
            <person name="Pinto L.S."/>
            <person name="Porto J.I.R."/>
            <person name="Potrich D.P."/>
            <person name="Ramalho-Neto C.E."/>
            <person name="Reis A.M.M."/>
            <person name="Rigo L.U."/>
            <person name="Rondinelli E."/>
            <person name="Santos E.B.P."/>
            <person name="Santos F.R."/>
            <person name="Schneider M.P.C."/>
            <person name="Seuanez H.N."/>
            <person name="Silva A.M.R."/>
            <person name="da Silva A.L.C."/>
            <person name="Silva D.W."/>
            <person name="Silva R."/>
            <person name="Simoes I.C."/>
            <person name="Simon D."/>
            <person name="Soares C.M.A."/>
            <person name="Soares R.B.A."/>
            <person name="Souza E.M."/>
            <person name="Souza K.R.L."/>
            <person name="Souza R.C."/>
            <person name="Steffens M.B.R."/>
            <person name="Steindel M."/>
            <person name="Teixeira S.R."/>
            <person name="Urmenyi T."/>
            <person name="Vettore A."/>
            <person name="Wassem R."/>
            <person name="Zaha A."/>
            <person name="Simpson A.J.G."/>
        </authorList>
    </citation>
    <scope>NUCLEOTIDE SEQUENCE [LARGE SCALE GENOMIC DNA]</scope>
    <source>
        <strain>ATCC 12472 / DSM 30191 / JCM 1249 / CCUG 213 / NBRC 12614 / NCIMB 9131 / NCTC 9757 / MK</strain>
    </source>
</reference>
<accession>Q7NZ47</accession>
<name>SUCC_CHRVO</name>